<accession>Q5UP10</accession>
<sequence>MKRALYLNKQYIPWGILNHKTLKNETVVLEKYNEINSSIGPVFHCKNLFVDSCDKDFVYFFVNKKFFPNVKKLYLASNPCSPEVLWRDFDTIYLTEIFSHYKNQWANNYKNVKIIPNNKFFYELQDYAPERIILEKEHDLY</sequence>
<evidence type="ECO:0000305" key="1"/>
<proteinExistence type="inferred from homology"/>
<organism>
    <name type="scientific">Acanthamoeba polyphaga mimivirus</name>
    <name type="common">APMV</name>
    <dbReference type="NCBI Taxonomy" id="212035"/>
    <lineage>
        <taxon>Viruses</taxon>
        <taxon>Varidnaviria</taxon>
        <taxon>Bamfordvirae</taxon>
        <taxon>Nucleocytoviricota</taxon>
        <taxon>Megaviricetes</taxon>
        <taxon>Imitervirales</taxon>
        <taxon>Mimiviridae</taxon>
        <taxon>Megamimivirinae</taxon>
        <taxon>Mimivirus</taxon>
        <taxon>Mimivirus bradfordmassiliense</taxon>
    </lineage>
</organism>
<dbReference type="EMBL" id="AY653733">
    <property type="protein sequence ID" value="AAV51107.1"/>
    <property type="molecule type" value="Genomic_DNA"/>
</dbReference>
<dbReference type="KEGG" id="vg:9925511"/>
<dbReference type="Proteomes" id="UP000001134">
    <property type="component" value="Genome"/>
</dbReference>
<dbReference type="InterPro" id="IPR043887">
    <property type="entry name" value="DUF5845"/>
</dbReference>
<dbReference type="Pfam" id="PF19163">
    <property type="entry name" value="DUF5845"/>
    <property type="match status" value="1"/>
</dbReference>
<organismHost>
    <name type="scientific">Acanthamoeba polyphaga</name>
    <name type="common">Amoeba</name>
    <dbReference type="NCBI Taxonomy" id="5757"/>
</organismHost>
<name>YR849_MIMIV</name>
<comment type="similarity">
    <text evidence="1">Belongs to the mimivirus L163/R849 family.</text>
</comment>
<reference key="1">
    <citation type="journal article" date="2004" name="Science">
        <title>The 1.2-megabase genome sequence of Mimivirus.</title>
        <authorList>
            <person name="Raoult D."/>
            <person name="Audic S."/>
            <person name="Robert C."/>
            <person name="Abergel C."/>
            <person name="Renesto P."/>
            <person name="Ogata H."/>
            <person name="La Scola B."/>
            <person name="Susan M."/>
            <person name="Claverie J.-M."/>
        </authorList>
    </citation>
    <scope>NUCLEOTIDE SEQUENCE [LARGE SCALE GENOMIC DNA]</scope>
    <source>
        <strain>Rowbotham-Bradford</strain>
    </source>
</reference>
<feature type="chain" id="PRO_0000071371" description="Uncharacterized protein R849">
    <location>
        <begin position="1"/>
        <end position="141"/>
    </location>
</feature>
<keyword id="KW-1185">Reference proteome</keyword>
<gene>
    <name type="ordered locus">MIMI_R849</name>
</gene>
<protein>
    <recommendedName>
        <fullName>Uncharacterized protein R849</fullName>
    </recommendedName>
</protein>